<protein>
    <recommendedName>
        <fullName>B3 domain-containing protein At3g17010</fullName>
    </recommendedName>
</protein>
<gene>
    <name type="ordered locus">At3g17010</name>
    <name type="ORF">K14A17.8</name>
</gene>
<evidence type="ECO:0000255" key="1">
    <source>
        <dbReference type="PROSITE-ProRule" id="PRU00326"/>
    </source>
</evidence>
<evidence type="ECO:0000256" key="2">
    <source>
        <dbReference type="SAM" id="MobiDB-lite"/>
    </source>
</evidence>
<accession>Q9LSP6</accession>
<reference key="1">
    <citation type="journal article" date="2000" name="DNA Res.">
        <title>Structural analysis of Arabidopsis thaliana chromosome 3. I. Sequence features of the regions of 4,504,864 bp covered by sixty P1 and TAC clones.</title>
        <authorList>
            <person name="Sato S."/>
            <person name="Nakamura Y."/>
            <person name="Kaneko T."/>
            <person name="Katoh T."/>
            <person name="Asamizu E."/>
            <person name="Tabata S."/>
        </authorList>
    </citation>
    <scope>NUCLEOTIDE SEQUENCE [LARGE SCALE GENOMIC DNA]</scope>
    <source>
        <strain>cv. Columbia</strain>
    </source>
</reference>
<reference key="2">
    <citation type="journal article" date="2017" name="Plant J.">
        <title>Araport11: a complete reannotation of the Arabidopsis thaliana reference genome.</title>
        <authorList>
            <person name="Cheng C.Y."/>
            <person name="Krishnakumar V."/>
            <person name="Chan A.P."/>
            <person name="Thibaud-Nissen F."/>
            <person name="Schobel S."/>
            <person name="Town C.D."/>
        </authorList>
    </citation>
    <scope>GENOME REANNOTATION</scope>
    <source>
        <strain>cv. Columbia</strain>
    </source>
</reference>
<reference key="3">
    <citation type="submission" date="2009-03" db="EMBL/GenBank/DDBJ databases">
        <title>ORF cloning and analysis of Arabidopsis transcription factor genes.</title>
        <authorList>
            <person name="Fujita M."/>
            <person name="Mizukado S."/>
            <person name="Seki M."/>
            <person name="Shinozaki K."/>
            <person name="Mitsuda N."/>
            <person name="Takiguchi Y."/>
            <person name="Takagi M."/>
        </authorList>
    </citation>
    <scope>NUCLEOTIDE SEQUENCE [LARGE SCALE MRNA]</scope>
</reference>
<reference key="4">
    <citation type="journal article" date="2008" name="Trends Plant Sci.">
        <title>The plant B3 superfamily.</title>
        <authorList>
            <person name="Swaminathan K."/>
            <person name="Peterson K."/>
            <person name="Jack T."/>
        </authorList>
    </citation>
    <scope>GENE FAMILY</scope>
</reference>
<sequence>MGKSSNIVFDRIKEERQMLSFFKIFQRADLSSDCMRALPYSFISKVSEKDFSYKMVIRAQWGKTWDVEVSKNPTYYYIETRGWDLFVSDNALGQNEFITFTHRGNMVFHVNIYEQNGLEMRKPRKFQTMGPSSGIKKEEGENSLIDVKKEEESDESPGRAEFLVRKKKTEDSKSSKKKMTRNKVKKKSKSKSKQVLDGVPEFKITIRKSYLKFLAIPKHFVDDHIPNKSKIFTIRHPNGGSWKVLCLVREIRTIFSGGYSKLAREFPLMVGDKCTFKLIKPFEFVLLTSKKNREKMDQCMID</sequence>
<comment type="subcellular location">
    <subcellularLocation>
        <location evidence="1">Nucleus</location>
    </subcellularLocation>
</comment>
<feature type="chain" id="PRO_0000375142" description="B3 domain-containing protein At3g17010">
    <location>
        <begin position="1"/>
        <end position="302"/>
    </location>
</feature>
<feature type="DNA-binding region" description="TF-B3 1" evidence="1">
    <location>
        <begin position="21"/>
        <end position="116"/>
    </location>
</feature>
<feature type="DNA-binding region" description="TF-B3 2" evidence="1">
    <location>
        <begin position="199"/>
        <end position="292"/>
    </location>
</feature>
<feature type="region of interest" description="Disordered" evidence="2">
    <location>
        <begin position="123"/>
        <end position="192"/>
    </location>
</feature>
<feature type="compositionally biased region" description="Basic and acidic residues" evidence="2">
    <location>
        <begin position="135"/>
        <end position="174"/>
    </location>
</feature>
<feature type="compositionally biased region" description="Basic residues" evidence="2">
    <location>
        <begin position="175"/>
        <end position="192"/>
    </location>
</feature>
<proteinExistence type="evidence at transcript level"/>
<name>Y3701_ARATH</name>
<keyword id="KW-0238">DNA-binding</keyword>
<keyword id="KW-0539">Nucleus</keyword>
<keyword id="KW-1185">Reference proteome</keyword>
<keyword id="KW-0677">Repeat</keyword>
<keyword id="KW-0804">Transcription</keyword>
<keyword id="KW-0805">Transcription regulation</keyword>
<dbReference type="EMBL" id="AB026636">
    <property type="protein sequence ID" value="BAA94979.1"/>
    <property type="molecule type" value="Genomic_DNA"/>
</dbReference>
<dbReference type="EMBL" id="CP002686">
    <property type="protein sequence ID" value="AEE75894.1"/>
    <property type="molecule type" value="Genomic_DNA"/>
</dbReference>
<dbReference type="EMBL" id="AB493618">
    <property type="protein sequence ID" value="BAH30456.1"/>
    <property type="molecule type" value="mRNA"/>
</dbReference>
<dbReference type="SMR" id="Q9LSP6"/>
<dbReference type="BioGRID" id="6290">
    <property type="interactions" value="6"/>
</dbReference>
<dbReference type="IntAct" id="Q9LSP6">
    <property type="interactions" value="6"/>
</dbReference>
<dbReference type="STRING" id="3702.Q9LSP6"/>
<dbReference type="iPTMnet" id="Q9LSP6"/>
<dbReference type="PaxDb" id="3702-AT3G17010.1"/>
<dbReference type="DNASU" id="820957"/>
<dbReference type="EnsemblPlants" id="AT3G17010.1">
    <property type="protein sequence ID" value="AT3G17010.1"/>
    <property type="gene ID" value="AT3G17010"/>
</dbReference>
<dbReference type="Gramene" id="AT3G17010.1">
    <property type="protein sequence ID" value="AT3G17010.1"/>
    <property type="gene ID" value="AT3G17010"/>
</dbReference>
<dbReference type="KEGG" id="ath:AT3G17010"/>
<dbReference type="Araport" id="AT3G17010"/>
<dbReference type="TAIR" id="AT3G17010">
    <property type="gene designation" value="REM22"/>
</dbReference>
<dbReference type="HOGENOM" id="CLU_083136_0_0_1"/>
<dbReference type="InParanoid" id="Q9LSP6"/>
<dbReference type="OMA" id="FHVNIYE"/>
<dbReference type="OrthoDB" id="1666376at2759"/>
<dbReference type="PhylomeDB" id="Q9LSP6"/>
<dbReference type="PRO" id="PR:Q9LSP6"/>
<dbReference type="Proteomes" id="UP000006548">
    <property type="component" value="Chromosome 3"/>
</dbReference>
<dbReference type="ExpressionAtlas" id="Q9LSP6">
    <property type="expression patterns" value="baseline and differential"/>
</dbReference>
<dbReference type="GO" id="GO:0005634">
    <property type="term" value="C:nucleus"/>
    <property type="evidence" value="ECO:0007669"/>
    <property type="project" value="UniProtKB-SubCell"/>
</dbReference>
<dbReference type="GO" id="GO:0003677">
    <property type="term" value="F:DNA binding"/>
    <property type="evidence" value="ECO:0007669"/>
    <property type="project" value="UniProtKB-KW"/>
</dbReference>
<dbReference type="CDD" id="cd10017">
    <property type="entry name" value="B3_DNA"/>
    <property type="match status" value="2"/>
</dbReference>
<dbReference type="Gene3D" id="2.40.330.10">
    <property type="entry name" value="DNA-binding pseudobarrel domain"/>
    <property type="match status" value="2"/>
</dbReference>
<dbReference type="InterPro" id="IPR003340">
    <property type="entry name" value="B3_DNA-bd"/>
</dbReference>
<dbReference type="InterPro" id="IPR015300">
    <property type="entry name" value="DNA-bd_pseudobarrel_sf"/>
</dbReference>
<dbReference type="InterPro" id="IPR039218">
    <property type="entry name" value="REM_fam"/>
</dbReference>
<dbReference type="PANTHER" id="PTHR31674">
    <property type="entry name" value="B3 DOMAIN-CONTAINING PROTEIN REM-LIKE 3-RELATED"/>
    <property type="match status" value="1"/>
</dbReference>
<dbReference type="PANTHER" id="PTHR31674:SF62">
    <property type="entry name" value="B3 DOMAIN-CONTAINING PROTEIN REM14-RELATED"/>
    <property type="match status" value="1"/>
</dbReference>
<dbReference type="Pfam" id="PF02362">
    <property type="entry name" value="B3"/>
    <property type="match status" value="2"/>
</dbReference>
<dbReference type="SMART" id="SM01019">
    <property type="entry name" value="B3"/>
    <property type="match status" value="2"/>
</dbReference>
<dbReference type="SUPFAM" id="SSF101936">
    <property type="entry name" value="DNA-binding pseudobarrel domain"/>
    <property type="match status" value="2"/>
</dbReference>
<dbReference type="PROSITE" id="PS50863">
    <property type="entry name" value="B3"/>
    <property type="match status" value="2"/>
</dbReference>
<organism>
    <name type="scientific">Arabidopsis thaliana</name>
    <name type="common">Mouse-ear cress</name>
    <dbReference type="NCBI Taxonomy" id="3702"/>
    <lineage>
        <taxon>Eukaryota</taxon>
        <taxon>Viridiplantae</taxon>
        <taxon>Streptophyta</taxon>
        <taxon>Embryophyta</taxon>
        <taxon>Tracheophyta</taxon>
        <taxon>Spermatophyta</taxon>
        <taxon>Magnoliopsida</taxon>
        <taxon>eudicotyledons</taxon>
        <taxon>Gunneridae</taxon>
        <taxon>Pentapetalae</taxon>
        <taxon>rosids</taxon>
        <taxon>malvids</taxon>
        <taxon>Brassicales</taxon>
        <taxon>Brassicaceae</taxon>
        <taxon>Camelineae</taxon>
        <taxon>Arabidopsis</taxon>
    </lineage>
</organism>